<comment type="function">
    <text evidence="1">PPIases accelerate the folding of proteins. It catalyzes the cis-trans isomerization of proline imidic peptide bonds in oligopeptides (By similarity).</text>
</comment>
<comment type="catalytic activity">
    <reaction>
        <text>[protein]-peptidylproline (omega=180) = [protein]-peptidylproline (omega=0)</text>
        <dbReference type="Rhea" id="RHEA:16237"/>
        <dbReference type="Rhea" id="RHEA-COMP:10747"/>
        <dbReference type="Rhea" id="RHEA-COMP:10748"/>
        <dbReference type="ChEBI" id="CHEBI:83833"/>
        <dbReference type="ChEBI" id="CHEBI:83834"/>
        <dbReference type="EC" id="5.2.1.8"/>
    </reaction>
</comment>
<comment type="activity regulation">
    <text evidence="1">Inhibited by both FK506 and rapamycin.</text>
</comment>
<comment type="subcellular location">
    <subcellularLocation>
        <location evidence="1">Cytoplasm</location>
    </subcellularLocation>
</comment>
<comment type="similarity">
    <text evidence="3">Belongs to the FKBP-type PPIase family. FKBP1 subfamily.</text>
</comment>
<keyword id="KW-0963">Cytoplasm</keyword>
<keyword id="KW-0413">Isomerase</keyword>
<keyword id="KW-1185">Reference proteome</keyword>
<keyword id="KW-0697">Rotamase</keyword>
<organism>
    <name type="scientific">Aspergillus oryzae (strain ATCC 42149 / RIB 40)</name>
    <name type="common">Yellow koji mold</name>
    <dbReference type="NCBI Taxonomy" id="510516"/>
    <lineage>
        <taxon>Eukaryota</taxon>
        <taxon>Fungi</taxon>
        <taxon>Dikarya</taxon>
        <taxon>Ascomycota</taxon>
        <taxon>Pezizomycotina</taxon>
        <taxon>Eurotiomycetes</taxon>
        <taxon>Eurotiomycetidae</taxon>
        <taxon>Eurotiales</taxon>
        <taxon>Aspergillaceae</taxon>
        <taxon>Aspergillus</taxon>
        <taxon>Aspergillus subgen. Circumdati</taxon>
    </lineage>
</organism>
<evidence type="ECO:0000250" key="1"/>
<evidence type="ECO:0000255" key="2">
    <source>
        <dbReference type="PROSITE-ProRule" id="PRU00277"/>
    </source>
</evidence>
<evidence type="ECO:0000305" key="3"/>
<feature type="chain" id="PRO_0000233320" description="FK506-binding protein 1">
    <location>
        <begin position="1"/>
        <end position="116"/>
    </location>
</feature>
<feature type="domain" description="PPIase FKBP-type" evidence="2">
    <location>
        <begin position="19"/>
        <end position="116"/>
    </location>
</feature>
<dbReference type="EC" id="5.2.1.8"/>
<dbReference type="EMBL" id="BA000054">
    <property type="protein sequence ID" value="BAE64049.1"/>
    <property type="molecule type" value="Genomic_DNA"/>
</dbReference>
<dbReference type="RefSeq" id="XP_001825182.1">
    <property type="nucleotide sequence ID" value="XM_001825130.2"/>
</dbReference>
<dbReference type="SMR" id="Q2U316"/>
<dbReference type="STRING" id="510516.Q2U316"/>
<dbReference type="EnsemblFungi" id="BAE64049">
    <property type="protein sequence ID" value="BAE64049"/>
    <property type="gene ID" value="AO090038000232"/>
</dbReference>
<dbReference type="GeneID" id="5997277"/>
<dbReference type="KEGG" id="aor:AO090038000232"/>
<dbReference type="VEuPathDB" id="FungiDB:AO090038000232"/>
<dbReference type="HOGENOM" id="CLU_013615_12_1_1"/>
<dbReference type="OMA" id="FTQATMG"/>
<dbReference type="OrthoDB" id="11301at5052"/>
<dbReference type="Proteomes" id="UP000006564">
    <property type="component" value="Chromosome 6"/>
</dbReference>
<dbReference type="GO" id="GO:0005737">
    <property type="term" value="C:cytoplasm"/>
    <property type="evidence" value="ECO:0007669"/>
    <property type="project" value="UniProtKB-SubCell"/>
</dbReference>
<dbReference type="GO" id="GO:0003755">
    <property type="term" value="F:peptidyl-prolyl cis-trans isomerase activity"/>
    <property type="evidence" value="ECO:0007669"/>
    <property type="project" value="UniProtKB-KW"/>
</dbReference>
<dbReference type="FunFam" id="3.10.50.40:FF:000006">
    <property type="entry name" value="Peptidyl-prolyl cis-trans isomerase"/>
    <property type="match status" value="1"/>
</dbReference>
<dbReference type="Gene3D" id="3.10.50.40">
    <property type="match status" value="1"/>
</dbReference>
<dbReference type="InterPro" id="IPR050689">
    <property type="entry name" value="FKBP-type_PPIase"/>
</dbReference>
<dbReference type="InterPro" id="IPR046357">
    <property type="entry name" value="PPIase_dom_sf"/>
</dbReference>
<dbReference type="InterPro" id="IPR001179">
    <property type="entry name" value="PPIase_FKBP_dom"/>
</dbReference>
<dbReference type="PANTHER" id="PTHR10516:SF443">
    <property type="entry name" value="FK506-BINDING PROTEIN 59-RELATED"/>
    <property type="match status" value="1"/>
</dbReference>
<dbReference type="PANTHER" id="PTHR10516">
    <property type="entry name" value="PEPTIDYL-PROLYL CIS-TRANS ISOMERASE"/>
    <property type="match status" value="1"/>
</dbReference>
<dbReference type="Pfam" id="PF00254">
    <property type="entry name" value="FKBP_C"/>
    <property type="match status" value="1"/>
</dbReference>
<dbReference type="SUPFAM" id="SSF54534">
    <property type="entry name" value="FKBP-like"/>
    <property type="match status" value="1"/>
</dbReference>
<dbReference type="PROSITE" id="PS50059">
    <property type="entry name" value="FKBP_PPIASE"/>
    <property type="match status" value="1"/>
</dbReference>
<accession>Q2U316</accession>
<proteinExistence type="inferred from homology"/>
<reference key="1">
    <citation type="journal article" date="2005" name="Nature">
        <title>Genome sequencing and analysis of Aspergillus oryzae.</title>
        <authorList>
            <person name="Machida M."/>
            <person name="Asai K."/>
            <person name="Sano M."/>
            <person name="Tanaka T."/>
            <person name="Kumagai T."/>
            <person name="Terai G."/>
            <person name="Kusumoto K."/>
            <person name="Arima T."/>
            <person name="Akita O."/>
            <person name="Kashiwagi Y."/>
            <person name="Abe K."/>
            <person name="Gomi K."/>
            <person name="Horiuchi H."/>
            <person name="Kitamoto K."/>
            <person name="Kobayashi T."/>
            <person name="Takeuchi M."/>
            <person name="Denning D.W."/>
            <person name="Galagan J.E."/>
            <person name="Nierman W.C."/>
            <person name="Yu J."/>
            <person name="Archer D.B."/>
            <person name="Bennett J.W."/>
            <person name="Bhatnagar D."/>
            <person name="Cleveland T.E."/>
            <person name="Fedorova N.D."/>
            <person name="Gotoh O."/>
            <person name="Horikawa H."/>
            <person name="Hosoyama A."/>
            <person name="Ichinomiya M."/>
            <person name="Igarashi R."/>
            <person name="Iwashita K."/>
            <person name="Juvvadi P.R."/>
            <person name="Kato M."/>
            <person name="Kato Y."/>
            <person name="Kin T."/>
            <person name="Kokubun A."/>
            <person name="Maeda H."/>
            <person name="Maeyama N."/>
            <person name="Maruyama J."/>
            <person name="Nagasaki H."/>
            <person name="Nakajima T."/>
            <person name="Oda K."/>
            <person name="Okada K."/>
            <person name="Paulsen I."/>
            <person name="Sakamoto K."/>
            <person name="Sawano T."/>
            <person name="Takahashi M."/>
            <person name="Takase K."/>
            <person name="Terabayashi Y."/>
            <person name="Wortman J.R."/>
            <person name="Yamada O."/>
            <person name="Yamagata Y."/>
            <person name="Anazawa H."/>
            <person name="Hata Y."/>
            <person name="Koide Y."/>
            <person name="Komori T."/>
            <person name="Koyama Y."/>
            <person name="Minetoki T."/>
            <person name="Suharnan S."/>
            <person name="Tanaka A."/>
            <person name="Isono K."/>
            <person name="Kuhara S."/>
            <person name="Ogasawara N."/>
            <person name="Kikuchi H."/>
        </authorList>
    </citation>
    <scope>NUCLEOTIDE SEQUENCE [LARGE SCALE GENOMIC DNA]</scope>
    <source>
        <strain>ATCC 42149 / RIB 40</strain>
    </source>
</reference>
<sequence length="116" mass="12470">MGVERKIITRGSGPSPASGDKVSIHYTGWIYDPKKANKGFQGKQFDSSRSPGRGPLVVNIGQGKVIKGWDEGVMQMSLGEKSTLTITPDYGYGDKAAGKIPANSTLIFEVELLKIN</sequence>
<name>FKBP_ASPOR</name>
<gene>
    <name type="primary">fpr1</name>
    <name type="ORF">AO090038000232</name>
</gene>
<protein>
    <recommendedName>
        <fullName>FK506-binding protein 1</fullName>
        <shortName>FKBP</shortName>
        <ecNumber>5.2.1.8</ecNumber>
    </recommendedName>
    <alternativeName>
        <fullName>Peptidyl-prolyl cis-trans isomerase</fullName>
        <shortName>PPIase</shortName>
    </alternativeName>
    <alternativeName>
        <fullName>Rapamycin-binding protein</fullName>
    </alternativeName>
</protein>